<accession>Q2G0Y6</accession>
<keyword id="KW-0067">ATP-binding</keyword>
<keyword id="KW-0315">Glutamine amidotransferase</keyword>
<keyword id="KW-0332">GMP biosynthesis</keyword>
<keyword id="KW-0436">Ligase</keyword>
<keyword id="KW-0547">Nucleotide-binding</keyword>
<keyword id="KW-0658">Purine biosynthesis</keyword>
<keyword id="KW-1185">Reference proteome</keyword>
<reference key="1">
    <citation type="book" date="2006" name="Gram positive pathogens, 2nd edition">
        <title>The Staphylococcus aureus NCTC 8325 genome.</title>
        <editorList>
            <person name="Fischetti V."/>
            <person name="Novick R."/>
            <person name="Ferretti J."/>
            <person name="Portnoy D."/>
            <person name="Rood J."/>
        </editorList>
        <authorList>
            <person name="Gillaspy A.F."/>
            <person name="Worrell V."/>
            <person name="Orvis J."/>
            <person name="Roe B.A."/>
            <person name="Dyer D.W."/>
            <person name="Iandolo J.J."/>
        </authorList>
    </citation>
    <scope>NUCLEOTIDE SEQUENCE [LARGE SCALE GENOMIC DNA]</scope>
    <source>
        <strain>NCTC 8325 / PS 47</strain>
    </source>
</reference>
<name>GUAA_STAA8</name>
<protein>
    <recommendedName>
        <fullName evidence="1">GMP synthase [glutamine-hydrolyzing]</fullName>
        <ecNumber evidence="1">6.3.5.2</ecNumber>
    </recommendedName>
    <alternativeName>
        <fullName evidence="1">GMP synthetase</fullName>
    </alternativeName>
    <alternativeName>
        <fullName evidence="1">Glutamine amidotransferase</fullName>
    </alternativeName>
</protein>
<evidence type="ECO:0000255" key="1">
    <source>
        <dbReference type="HAMAP-Rule" id="MF_00344"/>
    </source>
</evidence>
<feature type="chain" id="PRO_1000120422" description="GMP synthase [glutamine-hydrolyzing]">
    <location>
        <begin position="1"/>
        <end position="513"/>
    </location>
</feature>
<feature type="domain" description="Glutamine amidotransferase type-1" evidence="1">
    <location>
        <begin position="9"/>
        <end position="198"/>
    </location>
</feature>
<feature type="domain" description="GMPS ATP-PPase" evidence="1">
    <location>
        <begin position="199"/>
        <end position="388"/>
    </location>
</feature>
<feature type="active site" description="Nucleophile" evidence="1">
    <location>
        <position position="86"/>
    </location>
</feature>
<feature type="active site" evidence="1">
    <location>
        <position position="172"/>
    </location>
</feature>
<feature type="active site" evidence="1">
    <location>
        <position position="174"/>
    </location>
</feature>
<feature type="binding site" evidence="1">
    <location>
        <begin position="226"/>
        <end position="232"/>
    </location>
    <ligand>
        <name>ATP</name>
        <dbReference type="ChEBI" id="CHEBI:30616"/>
    </ligand>
</feature>
<proteinExistence type="inferred from homology"/>
<gene>
    <name evidence="1" type="primary">guaA</name>
    <name type="ordered locus">SAOUHSC_00375</name>
</gene>
<dbReference type="EC" id="6.3.5.2" evidence="1"/>
<dbReference type="EMBL" id="CP000253">
    <property type="protein sequence ID" value="ABD29541.1"/>
    <property type="molecule type" value="Genomic_DNA"/>
</dbReference>
<dbReference type="RefSeq" id="WP_000424966.1">
    <property type="nucleotide sequence ID" value="NZ_LS483365.1"/>
</dbReference>
<dbReference type="RefSeq" id="YP_498964.1">
    <property type="nucleotide sequence ID" value="NC_007795.1"/>
</dbReference>
<dbReference type="SMR" id="Q2G0Y6"/>
<dbReference type="STRING" id="93061.SAOUHSC_00375"/>
<dbReference type="MEROPS" id="C26.957"/>
<dbReference type="PaxDb" id="1280-SAXN108_0440"/>
<dbReference type="GeneID" id="3919794"/>
<dbReference type="KEGG" id="sao:SAOUHSC_00375"/>
<dbReference type="PATRIC" id="fig|93061.5.peg.345"/>
<dbReference type="eggNOG" id="COG0518">
    <property type="taxonomic scope" value="Bacteria"/>
</dbReference>
<dbReference type="eggNOG" id="COG0519">
    <property type="taxonomic scope" value="Bacteria"/>
</dbReference>
<dbReference type="HOGENOM" id="CLU_014340_0_5_9"/>
<dbReference type="OrthoDB" id="9802219at2"/>
<dbReference type="UniPathway" id="UPA00189">
    <property type="reaction ID" value="UER00296"/>
</dbReference>
<dbReference type="PRO" id="PR:Q2G0Y6"/>
<dbReference type="Proteomes" id="UP000008816">
    <property type="component" value="Chromosome"/>
</dbReference>
<dbReference type="GO" id="GO:0005829">
    <property type="term" value="C:cytosol"/>
    <property type="evidence" value="ECO:0000318"/>
    <property type="project" value="GO_Central"/>
</dbReference>
<dbReference type="GO" id="GO:0005524">
    <property type="term" value="F:ATP binding"/>
    <property type="evidence" value="ECO:0007669"/>
    <property type="project" value="UniProtKB-UniRule"/>
</dbReference>
<dbReference type="GO" id="GO:0003921">
    <property type="term" value="F:GMP synthase activity"/>
    <property type="evidence" value="ECO:0000318"/>
    <property type="project" value="GO_Central"/>
</dbReference>
<dbReference type="GO" id="GO:0006177">
    <property type="term" value="P:GMP biosynthetic process"/>
    <property type="evidence" value="ECO:0000318"/>
    <property type="project" value="GO_Central"/>
</dbReference>
<dbReference type="CDD" id="cd01742">
    <property type="entry name" value="GATase1_GMP_Synthase"/>
    <property type="match status" value="1"/>
</dbReference>
<dbReference type="CDD" id="cd01997">
    <property type="entry name" value="GMP_synthase_C"/>
    <property type="match status" value="1"/>
</dbReference>
<dbReference type="FunFam" id="3.30.300.10:FF:000002">
    <property type="entry name" value="GMP synthase [glutamine-hydrolyzing]"/>
    <property type="match status" value="1"/>
</dbReference>
<dbReference type="FunFam" id="3.40.50.620:FF:000001">
    <property type="entry name" value="GMP synthase [glutamine-hydrolyzing]"/>
    <property type="match status" value="1"/>
</dbReference>
<dbReference type="FunFam" id="3.40.50.880:FF:000001">
    <property type="entry name" value="GMP synthase [glutamine-hydrolyzing]"/>
    <property type="match status" value="1"/>
</dbReference>
<dbReference type="Gene3D" id="3.30.300.10">
    <property type="match status" value="1"/>
</dbReference>
<dbReference type="Gene3D" id="3.40.50.880">
    <property type="match status" value="1"/>
</dbReference>
<dbReference type="Gene3D" id="3.40.50.620">
    <property type="entry name" value="HUPs"/>
    <property type="match status" value="1"/>
</dbReference>
<dbReference type="HAMAP" id="MF_00344">
    <property type="entry name" value="GMP_synthase"/>
    <property type="match status" value="1"/>
</dbReference>
<dbReference type="InterPro" id="IPR029062">
    <property type="entry name" value="Class_I_gatase-like"/>
</dbReference>
<dbReference type="InterPro" id="IPR017926">
    <property type="entry name" value="GATASE"/>
</dbReference>
<dbReference type="InterPro" id="IPR001674">
    <property type="entry name" value="GMP_synth_C"/>
</dbReference>
<dbReference type="InterPro" id="IPR004739">
    <property type="entry name" value="GMP_synth_GATase"/>
</dbReference>
<dbReference type="InterPro" id="IPR022955">
    <property type="entry name" value="GMP_synthase"/>
</dbReference>
<dbReference type="InterPro" id="IPR025777">
    <property type="entry name" value="GMPS_ATP_PPase_dom"/>
</dbReference>
<dbReference type="InterPro" id="IPR014729">
    <property type="entry name" value="Rossmann-like_a/b/a_fold"/>
</dbReference>
<dbReference type="NCBIfam" id="TIGR00884">
    <property type="entry name" value="guaA_Cterm"/>
    <property type="match status" value="1"/>
</dbReference>
<dbReference type="NCBIfam" id="TIGR00888">
    <property type="entry name" value="guaA_Nterm"/>
    <property type="match status" value="1"/>
</dbReference>
<dbReference type="NCBIfam" id="NF000848">
    <property type="entry name" value="PRK00074.1"/>
    <property type="match status" value="1"/>
</dbReference>
<dbReference type="PANTHER" id="PTHR11922:SF2">
    <property type="entry name" value="GMP SYNTHASE [GLUTAMINE-HYDROLYZING]"/>
    <property type="match status" value="1"/>
</dbReference>
<dbReference type="PANTHER" id="PTHR11922">
    <property type="entry name" value="GMP SYNTHASE-RELATED"/>
    <property type="match status" value="1"/>
</dbReference>
<dbReference type="Pfam" id="PF00117">
    <property type="entry name" value="GATase"/>
    <property type="match status" value="1"/>
</dbReference>
<dbReference type="Pfam" id="PF00958">
    <property type="entry name" value="GMP_synt_C"/>
    <property type="match status" value="1"/>
</dbReference>
<dbReference type="Pfam" id="PF03054">
    <property type="entry name" value="tRNA_Me_trans"/>
    <property type="match status" value="1"/>
</dbReference>
<dbReference type="PRINTS" id="PR00097">
    <property type="entry name" value="ANTSNTHASEII"/>
</dbReference>
<dbReference type="PRINTS" id="PR00099">
    <property type="entry name" value="CPSGATASE"/>
</dbReference>
<dbReference type="PRINTS" id="PR00096">
    <property type="entry name" value="GATASE"/>
</dbReference>
<dbReference type="SUPFAM" id="SSF52402">
    <property type="entry name" value="Adenine nucleotide alpha hydrolases-like"/>
    <property type="match status" value="1"/>
</dbReference>
<dbReference type="SUPFAM" id="SSF52317">
    <property type="entry name" value="Class I glutamine amidotransferase-like"/>
    <property type="match status" value="1"/>
</dbReference>
<dbReference type="SUPFAM" id="SSF54810">
    <property type="entry name" value="GMP synthetase C-terminal dimerisation domain"/>
    <property type="match status" value="1"/>
</dbReference>
<dbReference type="PROSITE" id="PS51273">
    <property type="entry name" value="GATASE_TYPE_1"/>
    <property type="match status" value="1"/>
</dbReference>
<dbReference type="PROSITE" id="PS51553">
    <property type="entry name" value="GMPS_ATP_PPASE"/>
    <property type="match status" value="1"/>
</dbReference>
<organism>
    <name type="scientific">Staphylococcus aureus (strain NCTC 8325 / PS 47)</name>
    <dbReference type="NCBI Taxonomy" id="93061"/>
    <lineage>
        <taxon>Bacteria</taxon>
        <taxon>Bacillati</taxon>
        <taxon>Bacillota</taxon>
        <taxon>Bacilli</taxon>
        <taxon>Bacillales</taxon>
        <taxon>Staphylococcaceae</taxon>
        <taxon>Staphylococcus</taxon>
    </lineage>
</organism>
<comment type="function">
    <text evidence="1">Catalyzes the synthesis of GMP from XMP.</text>
</comment>
<comment type="catalytic activity">
    <reaction evidence="1">
        <text>XMP + L-glutamine + ATP + H2O = GMP + L-glutamate + AMP + diphosphate + 2 H(+)</text>
        <dbReference type="Rhea" id="RHEA:11680"/>
        <dbReference type="ChEBI" id="CHEBI:15377"/>
        <dbReference type="ChEBI" id="CHEBI:15378"/>
        <dbReference type="ChEBI" id="CHEBI:29985"/>
        <dbReference type="ChEBI" id="CHEBI:30616"/>
        <dbReference type="ChEBI" id="CHEBI:33019"/>
        <dbReference type="ChEBI" id="CHEBI:57464"/>
        <dbReference type="ChEBI" id="CHEBI:58115"/>
        <dbReference type="ChEBI" id="CHEBI:58359"/>
        <dbReference type="ChEBI" id="CHEBI:456215"/>
        <dbReference type="EC" id="6.3.5.2"/>
    </reaction>
</comment>
<comment type="pathway">
    <text evidence="1">Purine metabolism; GMP biosynthesis; GMP from XMP (L-Gln route): step 1/1.</text>
</comment>
<comment type="subunit">
    <text evidence="1">Homodimer.</text>
</comment>
<sequence length="513" mass="58230">MEMAKEQELILVLDFGSQYNQLITRRIREMGVYSELHDHEISIEEIKKMNPKGIILSGGPNSVYEEGSFTIDPEIYNLGIPVLGICYGMQLTTKLLGGKVERANEREYGKAIINAKSDELFAGLPAEQTVWMSHSDKVIEIPEGFEVIADSPSTDYAAIEDKKRRIYGVQFHPEVRHTEYGNDLLNNFVRRVCDCRGQWTMENFIEIEIEKIRQRVGDRRVLCAMSGGVDSSVVAVLLHKAIGDQLTCIFVDHGLLRKGEGDMVMEQFGEGFNMNIIRVNAKDRFMNKLKGVSDPEQKRKIIGNEFVYVFDDEASKLKGVDFLAQGTLYTDVIESGTKTAQTIKSHHNVGGLPEDMEFELIEPINTLFKDEVRKLGIELGIPEHLVWRQPFPGPGLGIRVLGEITEDKLEIVRESDAILRQVIREEGLEREIWQYFTVLPNIQSVGVMGDYRTYDHTVGIRAVTSIDGMTSDFARIDWEVLQKISSRIVNEVDHVNRVVYDITSKPPSTIEWE</sequence>